<sequence>MVMTDPIADFLTRIRNANQAKHEVLEVPASNIKKGIAEILKREGFVKNVEIIEDDKQGVIRVFLKYGPNGEKVITNLKRVSKPGLRVYKKREDLPKVLNGLGIAILSTSEGLLTDKEARQKNVGGEVIAYVW</sequence>
<reference key="1">
    <citation type="journal article" date="2009" name="BMC Genomics">
        <title>Genome evolution driven by host adaptations results in a more virulent and antimicrobial-resistant Streptococcus pneumoniae serotype 14.</title>
        <authorList>
            <person name="Ding F."/>
            <person name="Tang P."/>
            <person name="Hsu M.-H."/>
            <person name="Cui P."/>
            <person name="Hu S."/>
            <person name="Yu J."/>
            <person name="Chiu C.-H."/>
        </authorList>
    </citation>
    <scope>NUCLEOTIDE SEQUENCE [LARGE SCALE GENOMIC DNA]</scope>
    <source>
        <strain>CGSP14</strain>
    </source>
</reference>
<evidence type="ECO:0000255" key="1">
    <source>
        <dbReference type="HAMAP-Rule" id="MF_01302"/>
    </source>
</evidence>
<evidence type="ECO:0000305" key="2"/>
<keyword id="KW-0687">Ribonucleoprotein</keyword>
<keyword id="KW-0689">Ribosomal protein</keyword>
<keyword id="KW-0694">RNA-binding</keyword>
<keyword id="KW-0699">rRNA-binding</keyword>
<accession>B2IS54</accession>
<dbReference type="EMBL" id="CP001033">
    <property type="protein sequence ID" value="ACB89484.1"/>
    <property type="molecule type" value="Genomic_DNA"/>
</dbReference>
<dbReference type="RefSeq" id="WP_000245505.1">
    <property type="nucleotide sequence ID" value="NC_010582.1"/>
</dbReference>
<dbReference type="SMR" id="B2IS54"/>
<dbReference type="GeneID" id="45652295"/>
<dbReference type="KEGG" id="spw:SPCG_0232"/>
<dbReference type="HOGENOM" id="CLU_098428_0_2_9"/>
<dbReference type="GO" id="GO:1990904">
    <property type="term" value="C:ribonucleoprotein complex"/>
    <property type="evidence" value="ECO:0007669"/>
    <property type="project" value="UniProtKB-KW"/>
</dbReference>
<dbReference type="GO" id="GO:0005840">
    <property type="term" value="C:ribosome"/>
    <property type="evidence" value="ECO:0007669"/>
    <property type="project" value="UniProtKB-KW"/>
</dbReference>
<dbReference type="GO" id="GO:0019843">
    <property type="term" value="F:rRNA binding"/>
    <property type="evidence" value="ECO:0007669"/>
    <property type="project" value="UniProtKB-UniRule"/>
</dbReference>
<dbReference type="GO" id="GO:0003735">
    <property type="term" value="F:structural constituent of ribosome"/>
    <property type="evidence" value="ECO:0007669"/>
    <property type="project" value="InterPro"/>
</dbReference>
<dbReference type="GO" id="GO:0006412">
    <property type="term" value="P:translation"/>
    <property type="evidence" value="ECO:0007669"/>
    <property type="project" value="UniProtKB-UniRule"/>
</dbReference>
<dbReference type="FunFam" id="3.30.1370.30:FF:000002">
    <property type="entry name" value="30S ribosomal protein S8"/>
    <property type="match status" value="1"/>
</dbReference>
<dbReference type="FunFam" id="3.30.1490.10:FF:000001">
    <property type="entry name" value="30S ribosomal protein S8"/>
    <property type="match status" value="1"/>
</dbReference>
<dbReference type="Gene3D" id="3.30.1370.30">
    <property type="match status" value="1"/>
</dbReference>
<dbReference type="Gene3D" id="3.30.1490.10">
    <property type="match status" value="1"/>
</dbReference>
<dbReference type="HAMAP" id="MF_01302_B">
    <property type="entry name" value="Ribosomal_uS8_B"/>
    <property type="match status" value="1"/>
</dbReference>
<dbReference type="InterPro" id="IPR000630">
    <property type="entry name" value="Ribosomal_uS8"/>
</dbReference>
<dbReference type="InterPro" id="IPR047863">
    <property type="entry name" value="Ribosomal_uS8_CS"/>
</dbReference>
<dbReference type="InterPro" id="IPR035987">
    <property type="entry name" value="Ribosomal_uS8_sf"/>
</dbReference>
<dbReference type="NCBIfam" id="NF001109">
    <property type="entry name" value="PRK00136.1"/>
    <property type="match status" value="1"/>
</dbReference>
<dbReference type="PANTHER" id="PTHR11758">
    <property type="entry name" value="40S RIBOSOMAL PROTEIN S15A"/>
    <property type="match status" value="1"/>
</dbReference>
<dbReference type="Pfam" id="PF00410">
    <property type="entry name" value="Ribosomal_S8"/>
    <property type="match status" value="1"/>
</dbReference>
<dbReference type="SUPFAM" id="SSF56047">
    <property type="entry name" value="Ribosomal protein S8"/>
    <property type="match status" value="1"/>
</dbReference>
<dbReference type="PROSITE" id="PS00053">
    <property type="entry name" value="RIBOSOMAL_S8"/>
    <property type="match status" value="1"/>
</dbReference>
<name>RS8_STRPS</name>
<protein>
    <recommendedName>
        <fullName evidence="1">Small ribosomal subunit protein uS8</fullName>
    </recommendedName>
    <alternativeName>
        <fullName evidence="2">30S ribosomal protein S8</fullName>
    </alternativeName>
</protein>
<gene>
    <name evidence="1" type="primary">rpsH</name>
    <name type="ordered locus">SPCG_0232</name>
</gene>
<feature type="chain" id="PRO_1000140621" description="Small ribosomal subunit protein uS8">
    <location>
        <begin position="1"/>
        <end position="132"/>
    </location>
</feature>
<comment type="function">
    <text evidence="1">One of the primary rRNA binding proteins, it binds directly to 16S rRNA central domain where it helps coordinate assembly of the platform of the 30S subunit.</text>
</comment>
<comment type="subunit">
    <text evidence="1">Part of the 30S ribosomal subunit. Contacts proteins S5 and S12.</text>
</comment>
<comment type="similarity">
    <text evidence="1">Belongs to the universal ribosomal protein uS8 family.</text>
</comment>
<organism>
    <name type="scientific">Streptococcus pneumoniae (strain CGSP14)</name>
    <dbReference type="NCBI Taxonomy" id="516950"/>
    <lineage>
        <taxon>Bacteria</taxon>
        <taxon>Bacillati</taxon>
        <taxon>Bacillota</taxon>
        <taxon>Bacilli</taxon>
        <taxon>Lactobacillales</taxon>
        <taxon>Streptococcaceae</taxon>
        <taxon>Streptococcus</taxon>
    </lineage>
</organism>
<proteinExistence type="inferred from homology"/>